<gene>
    <name type="primary">ORF1</name>
</gene>
<evidence type="ECO:0000250" key="1"/>
<evidence type="ECO:0000250" key="2">
    <source>
        <dbReference type="UniProtKB" id="P0C6K4"/>
    </source>
</evidence>
<evidence type="ECO:0000250" key="3">
    <source>
        <dbReference type="UniProtKB" id="Q3ZN07"/>
    </source>
</evidence>
<evidence type="ECO:0000255" key="4"/>
<evidence type="ECO:0000305" key="5"/>
<dbReference type="EC" id="3.4.21.-" evidence="2"/>
<dbReference type="EMBL" id="Y15936">
    <property type="protein sequence ID" value="CAB95005.1"/>
    <property type="molecule type" value="Genomic_RNA"/>
</dbReference>
<dbReference type="Proteomes" id="UP000000676">
    <property type="component" value="Segment"/>
</dbReference>
<dbReference type="GO" id="GO:0033644">
    <property type="term" value="C:host cell membrane"/>
    <property type="evidence" value="ECO:0007669"/>
    <property type="project" value="UniProtKB-SubCell"/>
</dbReference>
<dbReference type="GO" id="GO:0016020">
    <property type="term" value="C:membrane"/>
    <property type="evidence" value="ECO:0007669"/>
    <property type="project" value="UniProtKB-KW"/>
</dbReference>
<dbReference type="GO" id="GO:0034062">
    <property type="term" value="F:5'-3' RNA polymerase activity"/>
    <property type="evidence" value="ECO:0007669"/>
    <property type="project" value="RHEA"/>
</dbReference>
<dbReference type="GO" id="GO:0008236">
    <property type="term" value="F:serine-type peptidase activity"/>
    <property type="evidence" value="ECO:0007669"/>
    <property type="project" value="UniProtKB-KW"/>
</dbReference>
<dbReference type="GO" id="GO:0006508">
    <property type="term" value="P:proteolysis"/>
    <property type="evidence" value="ECO:0007669"/>
    <property type="project" value="UniProtKB-KW"/>
</dbReference>
<dbReference type="GO" id="GO:0075523">
    <property type="term" value="P:viral translational frameshifting"/>
    <property type="evidence" value="ECO:0007669"/>
    <property type="project" value="UniProtKB-KW"/>
</dbReference>
<dbReference type="Gene3D" id="2.40.10.10">
    <property type="entry name" value="Trypsin-like serine proteases"/>
    <property type="match status" value="1"/>
</dbReference>
<dbReference type="InterPro" id="IPR045836">
    <property type="entry name" value="Astro_VPg"/>
</dbReference>
<dbReference type="InterPro" id="IPR009003">
    <property type="entry name" value="Peptidase_S1_PA"/>
</dbReference>
<dbReference type="InterPro" id="IPR043504">
    <property type="entry name" value="Peptidase_S1_PA_chymotrypsin"/>
</dbReference>
<dbReference type="Pfam" id="PF19416">
    <property type="entry name" value="Astro_VPg"/>
    <property type="match status" value="1"/>
</dbReference>
<dbReference type="SUPFAM" id="SSF50494">
    <property type="entry name" value="Trypsin-like serine proteases"/>
    <property type="match status" value="1"/>
</dbReference>
<reference key="1">
    <citation type="journal article" date="2003" name="Virus Res.">
        <title>Complete genomic sequences of astroviruses from sheep and turkey: comparison with related viruses.</title>
        <authorList>
            <person name="Jonassen C.M."/>
            <person name="Jonassen T.O."/>
            <person name="Sveen T.M."/>
            <person name="Grinde B."/>
        </authorList>
    </citation>
    <scope>NUCLEOTIDE SEQUENCE [GENOMIC RNA]</scope>
</reference>
<organism>
    <name type="scientific">Turkey astrovirus 1</name>
    <name type="common">TAstV-1</name>
    <dbReference type="NCBI Taxonomy" id="364370"/>
    <lineage>
        <taxon>Viruses</taxon>
        <taxon>Riboviria</taxon>
        <taxon>Orthornavirae</taxon>
        <taxon>Pisuviricota</taxon>
        <taxon>Stelpaviricetes</taxon>
        <taxon>Stellavirales</taxon>
        <taxon>Astroviridae</taxon>
        <taxon>Avastrovirus</taxon>
        <taxon>Avastrovirus 1</taxon>
    </lineage>
</organism>
<keyword id="KW-0191">Covalent protein-RNA linkage</keyword>
<keyword id="KW-1043">Host membrane</keyword>
<keyword id="KW-0378">Hydrolase</keyword>
<keyword id="KW-0472">Membrane</keyword>
<keyword id="KW-0597">Phosphoprotein</keyword>
<keyword id="KW-0645">Protease</keyword>
<keyword id="KW-1185">Reference proteome</keyword>
<keyword id="KW-0688">Ribosomal frameshifting</keyword>
<keyword id="KW-0720">Serine protease</keyword>
<keyword id="KW-0812">Transmembrane</keyword>
<keyword id="KW-1133">Transmembrane helix</keyword>
<keyword id="KW-0693">Viral RNA replication</keyword>
<name>NS1A_TASV1</name>
<accession>Q9JH70</accession>
<comment type="function">
    <molecule>Serine protease p27</molecule>
    <text evidence="2">Responsible for the cleavage of the polyprotein into functional products.</text>
</comment>
<comment type="function">
    <molecule>Viral genome-linked protein</molecule>
    <text evidence="3">Protein covalently attached to the 5' extremity of the genomic and subgenomic RNAs (By similarity). It may serve as a primer for the replicase (By similarity).</text>
</comment>
<comment type="catalytic activity">
    <reaction>
        <text>RNA(n) + a ribonucleoside 5'-triphosphate = RNA(n+1) + diphosphate</text>
        <dbReference type="Rhea" id="RHEA:21248"/>
        <dbReference type="Rhea" id="RHEA-COMP:14527"/>
        <dbReference type="Rhea" id="RHEA-COMP:17342"/>
        <dbReference type="ChEBI" id="CHEBI:33019"/>
        <dbReference type="ChEBI" id="CHEBI:61557"/>
        <dbReference type="ChEBI" id="CHEBI:140395"/>
    </reaction>
</comment>
<comment type="subunit">
    <molecule>Serine protease p27</molecule>
    <text evidence="2">Monomer.</text>
</comment>
<comment type="subcellular location">
    <molecule>Transmembrane protein 1A</molecule>
    <subcellularLocation>
        <location evidence="5">Host membrane</location>
        <topology evidence="5">Multi-pass membrane protein</topology>
    </subcellularLocation>
</comment>
<comment type="alternative products">
    <event type="ribosomal frameshifting"/>
    <isoform>
        <id>Q9JH70-1</id>
        <name>nsp1a</name>
        <sequence type="displayed"/>
    </isoform>
    <isoform>
        <id>Q9JH69-1</id>
        <name>nsp1ab</name>
        <sequence type="external"/>
    </isoform>
</comment>
<comment type="PTM">
    <text evidence="2">Cleaved by the viral and host proteases (By similarity). The protease is probably autocatalytically cleaved (By similarity).</text>
</comment>
<comment type="similarity">
    <text evidence="5">Belongs to the astroviridae polyprotein 1A family.</text>
</comment>
<organismHost>
    <name type="scientific">Meleagris gallopavo</name>
    <name type="common">Wild turkey</name>
    <dbReference type="NCBI Taxonomy" id="9103"/>
</organismHost>
<protein>
    <recommendedName>
        <fullName>Non-structural polyprotein 1A</fullName>
    </recommendedName>
    <component>
        <recommendedName>
            <fullName>Protein p19</fullName>
        </recommendedName>
    </component>
    <component>
        <recommendedName>
            <fullName>Transmembrane protein 1A</fullName>
        </recommendedName>
    </component>
    <component>
        <recommendedName>
            <fullName>Serine protease p27</fullName>
            <shortName>p27</shortName>
            <ecNumber evidence="2">3.4.21.-</ecNumber>
        </recommendedName>
    </component>
    <component>
        <recommendedName>
            <fullName>Viral genome-linked protein</fullName>
        </recommendedName>
        <alternativeName>
            <fullName>VPg</fullName>
        </alternativeName>
    </component>
    <component>
        <recommendedName>
            <fullName>Protein p20'</fullName>
        </recommendedName>
    </component>
</protein>
<feature type="chain" id="PRO_0000327355" description="Non-structural polyprotein 1A">
    <location>
        <begin position="1"/>
        <end position="1099"/>
    </location>
</feature>
<feature type="chain" id="PRO_0000327356" description="Protein p19" evidence="4">
    <location>
        <begin position="1"/>
        <end position="168"/>
    </location>
</feature>
<feature type="chain" id="PRO_0000327357" description="Transmembrane protein 1A" evidence="4">
    <location>
        <begin position="169"/>
        <end position="508"/>
    </location>
</feature>
<feature type="chain" id="PRO_0000327358" description="Serine protease p27" evidence="4">
    <location>
        <begin position="509"/>
        <end position="795"/>
    </location>
</feature>
<feature type="chain" id="PRO_0000419601" description="Viral genome-linked protein" evidence="4">
    <location>
        <begin position="796"/>
        <end position="915"/>
    </location>
</feature>
<feature type="chain" id="PRO_0000327359" description="Protein p20'" evidence="4">
    <location>
        <begin position="916"/>
        <end position="1099"/>
    </location>
</feature>
<feature type="transmembrane region" description="Helical" evidence="4">
    <location>
        <begin position="195"/>
        <end position="215"/>
    </location>
</feature>
<feature type="transmembrane region" description="Helical" evidence="4">
    <location>
        <begin position="329"/>
        <end position="348"/>
    </location>
</feature>
<feature type="transmembrane region" description="Helical" evidence="4">
    <location>
        <begin position="353"/>
        <end position="373"/>
    </location>
</feature>
<feature type="transmembrane region" description="Helical" evidence="4">
    <location>
        <begin position="397"/>
        <end position="417"/>
    </location>
</feature>
<feature type="transmembrane region" description="Helical" evidence="4">
    <location>
        <begin position="426"/>
        <end position="446"/>
    </location>
</feature>
<feature type="transmembrane region" description="Helical" evidence="4">
    <location>
        <begin position="450"/>
        <end position="470"/>
    </location>
</feature>
<feature type="active site" description="Charge relay system; for serine protease activity" evidence="1">
    <location>
        <position position="550"/>
    </location>
</feature>
<feature type="active site" description="Charge relay system; for serine protease activity" evidence="1">
    <location>
        <position position="582"/>
    </location>
</feature>
<feature type="active site" description="Charge relay system; for serine protease activity" evidence="1">
    <location>
        <position position="647"/>
    </location>
</feature>
<feature type="site" description="Cleavage" evidence="4">
    <location>
        <begin position="168"/>
        <end position="169"/>
    </location>
</feature>
<feature type="site" description="Cleavage" evidence="4">
    <location>
        <begin position="508"/>
        <end position="509"/>
    </location>
</feature>
<feature type="site" description="Cleavage" evidence="2">
    <location>
        <begin position="795"/>
        <end position="796"/>
    </location>
</feature>
<feature type="site" description="Cleavage" evidence="4">
    <location>
        <begin position="915"/>
        <end position="916"/>
    </location>
</feature>
<feature type="modified residue" description="O-(5'-phospho-RNA)-tyrosine" evidence="3">
    <location>
        <position position="833"/>
    </location>
</feature>
<sequence length="1099" mass="123391">MAAAAASALGASAPKALAPADGPIVAGLDKLVNLEGVHDLFEAMRGAYGEDPAWKGLMSCDVVYLKDITTAIGVKDTSVGIFRKFSDGCSWCPTGAECFLSMKDLAYMKAQSAKAQRLTASLATTSNLIARAMRAESELKRARDEERKVDARYKDILEHSLAARKALQKELDETRERELHLLKELGKRSSIRTKAFSFFDWLFMAVVFFLFLHYTSAECVKPDFGCLVVNSNLPVPSLTFHDVMARCYNTFGNIVLSSQIDAARLREECEQSANKFLGTHIGDPAHKVWCENRLETLIPVECDSSEFLEIFTSNLNAFMVSVSQFYKTISYYKLDALVTFAFSAALATNKLKMVMVLPLLLVALYLNVPPITVTIASVIFQPLILPFVGFQLVFPNFLPYNLFVAWVWMVCQAFFSSDGVKLLVSVSTALVQVVFLAVWSISVIVLQQLSIPMVAQILLFVATLTVSVGVKFANSTITVVHPDGNTEKVSRVTLVRQSMAKRISQIKQSLTIRGVIPSGPNRFDSIVVVEGQGGSGVGWRFMNSIFTAGHVVQGSKFVTIKSESTQVKVKVKRVIDLFECVDTLVEIPLTKEFQHIKPLRLAKKVEDSYLQLCAFKPDMVEKASYQGWCTIDSGFIFNSFNTQFGNSGAPYVDSDGRLVGMHLGSQGVISQGVVLVDTLKTQFLAQQSQIDDQLMERIIEGTKVSHAAILTELDRMRTKVEEVALVSARVNQLESQLKDLYEFSSNSIKCLSDDIEKMVCAQLFDEINLQSVMEKISALPPTEKLAKLVEVFVEQKKKGKTKRTARGGKHALGKKYLSKAHFSRMRMLTEEEYNKMVEDGFSPDEIKEVVDQLREQAWQNYLIDNDIGEDDDLDWYDDMLEDERLNEEIDRRVEAALEDRGELAYQKIRRTFVDQALIHLITLKKGNWQTTKVECQPEREEAYKEQFQKAVKQEDLTEGTSYAIYSAGDATILIENKEIDHTEIKPVTTGAKTVQEYPKDARTTVATFDDNKKDIVKTKRTTEIVLEQRKKTCRTCGETRPHNHKMCRDRHTRRFCFWCGVVHSDVEGHSRDLKCPKCSAGFANLREMEQHAVTTCSKN</sequence>
<proteinExistence type="inferred from homology"/>